<reference key="1">
    <citation type="submission" date="2005-08" db="EMBL/GenBank/DDBJ databases">
        <title>Complete sequence of chromosome 1 of Nitrosospira multiformis ATCC 25196.</title>
        <authorList>
            <person name="Copeland A."/>
            <person name="Lucas S."/>
            <person name="Lapidus A."/>
            <person name="Barry K."/>
            <person name="Detter J.C."/>
            <person name="Glavina T."/>
            <person name="Hammon N."/>
            <person name="Israni S."/>
            <person name="Pitluck S."/>
            <person name="Chain P."/>
            <person name="Malfatti S."/>
            <person name="Shin M."/>
            <person name="Vergez L."/>
            <person name="Schmutz J."/>
            <person name="Larimer F."/>
            <person name="Land M."/>
            <person name="Hauser L."/>
            <person name="Kyrpides N."/>
            <person name="Lykidis A."/>
            <person name="Richardson P."/>
        </authorList>
    </citation>
    <scope>NUCLEOTIDE SEQUENCE [LARGE SCALE GENOMIC DNA]</scope>
    <source>
        <strain>ATCC 25196 / NCIMB 11849 / C 71</strain>
    </source>
</reference>
<dbReference type="EMBL" id="CP000103">
    <property type="protein sequence ID" value="ABB73977.1"/>
    <property type="molecule type" value="Genomic_DNA"/>
</dbReference>
<dbReference type="RefSeq" id="WP_011380027.1">
    <property type="nucleotide sequence ID" value="NC_007614.1"/>
</dbReference>
<dbReference type="SMR" id="Q2YB94"/>
<dbReference type="STRING" id="323848.Nmul_A0670"/>
<dbReference type="KEGG" id="nmu:Nmul_A0670"/>
<dbReference type="eggNOG" id="COG0249">
    <property type="taxonomic scope" value="Bacteria"/>
</dbReference>
<dbReference type="HOGENOM" id="CLU_002472_3_1_4"/>
<dbReference type="OrthoDB" id="9802448at2"/>
<dbReference type="Proteomes" id="UP000002718">
    <property type="component" value="Chromosome"/>
</dbReference>
<dbReference type="GO" id="GO:0005829">
    <property type="term" value="C:cytosol"/>
    <property type="evidence" value="ECO:0007669"/>
    <property type="project" value="TreeGrafter"/>
</dbReference>
<dbReference type="GO" id="GO:0005524">
    <property type="term" value="F:ATP binding"/>
    <property type="evidence" value="ECO:0007669"/>
    <property type="project" value="UniProtKB-UniRule"/>
</dbReference>
<dbReference type="GO" id="GO:0140664">
    <property type="term" value="F:ATP-dependent DNA damage sensor activity"/>
    <property type="evidence" value="ECO:0007669"/>
    <property type="project" value="InterPro"/>
</dbReference>
<dbReference type="GO" id="GO:0003684">
    <property type="term" value="F:damaged DNA binding"/>
    <property type="evidence" value="ECO:0007669"/>
    <property type="project" value="UniProtKB-UniRule"/>
</dbReference>
<dbReference type="GO" id="GO:0030983">
    <property type="term" value="F:mismatched DNA binding"/>
    <property type="evidence" value="ECO:0007669"/>
    <property type="project" value="InterPro"/>
</dbReference>
<dbReference type="GO" id="GO:0006298">
    <property type="term" value="P:mismatch repair"/>
    <property type="evidence" value="ECO:0007669"/>
    <property type="project" value="UniProtKB-UniRule"/>
</dbReference>
<dbReference type="CDD" id="cd03284">
    <property type="entry name" value="ABC_MutS1"/>
    <property type="match status" value="1"/>
</dbReference>
<dbReference type="FunFam" id="1.10.1420.10:FF:000001">
    <property type="entry name" value="DNA mismatch repair protein MutS"/>
    <property type="match status" value="1"/>
</dbReference>
<dbReference type="FunFam" id="3.40.1170.10:FF:000001">
    <property type="entry name" value="DNA mismatch repair protein MutS"/>
    <property type="match status" value="1"/>
</dbReference>
<dbReference type="FunFam" id="3.40.50.300:FF:000870">
    <property type="entry name" value="MutS protein homolog 4"/>
    <property type="match status" value="1"/>
</dbReference>
<dbReference type="Gene3D" id="1.10.1420.10">
    <property type="match status" value="2"/>
</dbReference>
<dbReference type="Gene3D" id="6.10.140.430">
    <property type="match status" value="1"/>
</dbReference>
<dbReference type="Gene3D" id="3.40.1170.10">
    <property type="entry name" value="DNA repair protein MutS, domain I"/>
    <property type="match status" value="1"/>
</dbReference>
<dbReference type="Gene3D" id="3.30.420.110">
    <property type="entry name" value="MutS, connector domain"/>
    <property type="match status" value="1"/>
</dbReference>
<dbReference type="Gene3D" id="3.40.50.300">
    <property type="entry name" value="P-loop containing nucleotide triphosphate hydrolases"/>
    <property type="match status" value="1"/>
</dbReference>
<dbReference type="HAMAP" id="MF_00096">
    <property type="entry name" value="MutS"/>
    <property type="match status" value="1"/>
</dbReference>
<dbReference type="InterPro" id="IPR005748">
    <property type="entry name" value="DNA_mismatch_repair_MutS"/>
</dbReference>
<dbReference type="InterPro" id="IPR007695">
    <property type="entry name" value="DNA_mismatch_repair_MutS-lik_N"/>
</dbReference>
<dbReference type="InterPro" id="IPR017261">
    <property type="entry name" value="DNA_mismatch_repair_MutS/MSH"/>
</dbReference>
<dbReference type="InterPro" id="IPR000432">
    <property type="entry name" value="DNA_mismatch_repair_MutS_C"/>
</dbReference>
<dbReference type="InterPro" id="IPR007861">
    <property type="entry name" value="DNA_mismatch_repair_MutS_clamp"/>
</dbReference>
<dbReference type="InterPro" id="IPR007696">
    <property type="entry name" value="DNA_mismatch_repair_MutS_core"/>
</dbReference>
<dbReference type="InterPro" id="IPR016151">
    <property type="entry name" value="DNA_mismatch_repair_MutS_N"/>
</dbReference>
<dbReference type="InterPro" id="IPR036187">
    <property type="entry name" value="DNA_mismatch_repair_MutS_sf"/>
</dbReference>
<dbReference type="InterPro" id="IPR007860">
    <property type="entry name" value="DNA_mmatch_repair_MutS_con_dom"/>
</dbReference>
<dbReference type="InterPro" id="IPR045076">
    <property type="entry name" value="MutS"/>
</dbReference>
<dbReference type="InterPro" id="IPR036678">
    <property type="entry name" value="MutS_con_dom_sf"/>
</dbReference>
<dbReference type="InterPro" id="IPR027417">
    <property type="entry name" value="P-loop_NTPase"/>
</dbReference>
<dbReference type="NCBIfam" id="TIGR01070">
    <property type="entry name" value="mutS1"/>
    <property type="match status" value="1"/>
</dbReference>
<dbReference type="NCBIfam" id="NF003810">
    <property type="entry name" value="PRK05399.1"/>
    <property type="match status" value="1"/>
</dbReference>
<dbReference type="PANTHER" id="PTHR11361:SF34">
    <property type="entry name" value="DNA MISMATCH REPAIR PROTEIN MSH1, MITOCHONDRIAL"/>
    <property type="match status" value="1"/>
</dbReference>
<dbReference type="PANTHER" id="PTHR11361">
    <property type="entry name" value="DNA MISMATCH REPAIR PROTEIN MUTS FAMILY MEMBER"/>
    <property type="match status" value="1"/>
</dbReference>
<dbReference type="Pfam" id="PF01624">
    <property type="entry name" value="MutS_I"/>
    <property type="match status" value="1"/>
</dbReference>
<dbReference type="Pfam" id="PF05188">
    <property type="entry name" value="MutS_II"/>
    <property type="match status" value="1"/>
</dbReference>
<dbReference type="Pfam" id="PF05192">
    <property type="entry name" value="MutS_III"/>
    <property type="match status" value="1"/>
</dbReference>
<dbReference type="Pfam" id="PF05190">
    <property type="entry name" value="MutS_IV"/>
    <property type="match status" value="1"/>
</dbReference>
<dbReference type="Pfam" id="PF00488">
    <property type="entry name" value="MutS_V"/>
    <property type="match status" value="1"/>
</dbReference>
<dbReference type="PIRSF" id="PIRSF037677">
    <property type="entry name" value="DNA_mis_repair_Msh6"/>
    <property type="match status" value="1"/>
</dbReference>
<dbReference type="SMART" id="SM00534">
    <property type="entry name" value="MUTSac"/>
    <property type="match status" value="1"/>
</dbReference>
<dbReference type="SMART" id="SM00533">
    <property type="entry name" value="MUTSd"/>
    <property type="match status" value="1"/>
</dbReference>
<dbReference type="SUPFAM" id="SSF55271">
    <property type="entry name" value="DNA repair protein MutS, domain I"/>
    <property type="match status" value="1"/>
</dbReference>
<dbReference type="SUPFAM" id="SSF53150">
    <property type="entry name" value="DNA repair protein MutS, domain II"/>
    <property type="match status" value="1"/>
</dbReference>
<dbReference type="SUPFAM" id="SSF48334">
    <property type="entry name" value="DNA repair protein MutS, domain III"/>
    <property type="match status" value="1"/>
</dbReference>
<dbReference type="SUPFAM" id="SSF52540">
    <property type="entry name" value="P-loop containing nucleoside triphosphate hydrolases"/>
    <property type="match status" value="1"/>
</dbReference>
<dbReference type="PROSITE" id="PS00486">
    <property type="entry name" value="DNA_MISMATCH_REPAIR_2"/>
    <property type="match status" value="1"/>
</dbReference>
<protein>
    <recommendedName>
        <fullName evidence="1">DNA mismatch repair protein MutS</fullName>
    </recommendedName>
</protein>
<feature type="chain" id="PRO_0000335187" description="DNA mismatch repair protein MutS">
    <location>
        <begin position="1"/>
        <end position="902"/>
    </location>
</feature>
<feature type="binding site" evidence="1">
    <location>
        <begin position="647"/>
        <end position="654"/>
    </location>
    <ligand>
        <name>ATP</name>
        <dbReference type="ChEBI" id="CHEBI:30616"/>
    </ligand>
</feature>
<proteinExistence type="inferred from homology"/>
<comment type="function">
    <text evidence="1">This protein is involved in the repair of mismatches in DNA. It is possible that it carries out the mismatch recognition step. This protein has a weak ATPase activity.</text>
</comment>
<comment type="similarity">
    <text evidence="1">Belongs to the DNA mismatch repair MutS family.</text>
</comment>
<keyword id="KW-0067">ATP-binding</keyword>
<keyword id="KW-0227">DNA damage</keyword>
<keyword id="KW-0234">DNA repair</keyword>
<keyword id="KW-0238">DNA-binding</keyword>
<keyword id="KW-0547">Nucleotide-binding</keyword>
<keyword id="KW-1185">Reference proteome</keyword>
<organism>
    <name type="scientific">Nitrosospira multiformis (strain ATCC 25196 / NCIMB 11849 / C 71)</name>
    <dbReference type="NCBI Taxonomy" id="323848"/>
    <lineage>
        <taxon>Bacteria</taxon>
        <taxon>Pseudomonadati</taxon>
        <taxon>Pseudomonadota</taxon>
        <taxon>Betaproteobacteria</taxon>
        <taxon>Nitrosomonadales</taxon>
        <taxon>Nitrosomonadaceae</taxon>
        <taxon>Nitrosospira</taxon>
    </lineage>
</organism>
<name>MUTS_NITMU</name>
<sequence length="902" mass="99553">MSQSSKARLSTDPTVFEAVLNNHTPMMQQYLRIKAQHPDMLMFYRMGDFYELFFDDAEKAAKLLDITLTRRGTSAGEPIKMAGVPYHAAEQYLAKLVKLGESVVICEQVGDPATSKGPVERQVTRIITPGTLTDAALLEDKRDSALLALLVHESTLGLAWLNLAAGQFSVMETSVNNLTAELERLKPAEILLPESLNLAGINDRVIQEKLCVKHLPAWQFDTAAAVRNLSRQFGTHDLSGFGCEDLDVSLGAASALLDYTRLTQGASIGHIKGLRVEREDTYLRMDATTRRNLEISETIRGDAAPTLLSLLDTCSTNMGSRLLCHWLHHPLRDRGLIQNRLNGVSFLMGEAGSGPCLSVRDCLKRVTDIERITARIALKSARPRDLSGLRDSLKRLPAVNNAVAGTATTSSGGSDVSAHVAALIHSMAPDNALVALLEKSLKEEPEVMLRTGGVIADGYDAELDELRAIHNNCDEFLLQLETREKARTGIANLKVEYNRLHGFYIEVTHAHTEKIPDDYRRRQTLKNAERYITPELKAFEEKALSAQSRALEREKLLYGELLDMLSQYIDHLQQVARSVAELDVLATFAERALALDYSLPLFTSDSVIEIQAGRHPVVEKQVDSFIANDVQLGARTGGRRQMLVITGPNMGGKSTYMRQVALIALLAHCGSFVPARSALIGPLDQLFTRIGASDDLAGGRSTFMMEMTEAANILHNATAQSLVLMDEVGRGTSTFDGLALAFAIARYLLEKNRSYTLFATHYFELTRLAEEFAQVANVHLRAVEHKHHIVFLHAVNEGPASQSYGLQVAALAGVPDPVIRTARRYLLKLEQEALSNQPQGDLFSRDDLFWKQDRMPEGSVDKNDSAPEHPVLALLRTIVPDDLSPKQALEQLYGLKKAAEKE</sequence>
<accession>Q2YB94</accession>
<evidence type="ECO:0000255" key="1">
    <source>
        <dbReference type="HAMAP-Rule" id="MF_00096"/>
    </source>
</evidence>
<gene>
    <name evidence="1" type="primary">mutS</name>
    <name type="ordered locus">Nmul_A0670</name>
</gene>